<sequence>MLIKNFFIAFLMFFSILVHAENKFIVKDIQFKGLKNFSQNEALKNIPFRIGSTISQYDVKNSIKSLFKTGKFEDIKVSFLGKTIVFNIRERPIISNVIVSGNHIIASSVLDPYLKKLNIETGKSFNNFFTNVLTKTIKDFYLDIGRCKPDIKILKIFSKNNSVSIKILINEGTEIKINSIKILGVQAFSKEKILSLFKLQDYHSWWNLLSKSTYSPKELNNDLEHLKNFYLSNGYYYFNVNTKKVDFLQDKKQVDITIGVSEGKKYKISNFFVNGNLFPYQKLITNLININPNEFYNRDKIDIIVNKITRFLSEYGYVNTKVIVDPQIDHKKKTIALNFNIDMKKRYFVKRIYFTGNEITQDRVLRRKIKQMEGKYFNTKLVELGKKLLEKTKYFSDVKIIQKLNSYDSNQIDITYQVKEQTTGSINFGLGYGVDSGTSFNLAFSQDNIFGSGNSLKVDIIKNDYQKYLDISTSYPYFFYNNADLNARFFYNDFKYNFDNISNIIKNTYGFEGNLGFLINNYNKVNFGFGYTHNSINNEEKKIHGKFTGELNINKLYYFVGVDDTRFKKIAIPGDQIFIKVTILKSNKNILIFKNIAVVNNDIICKSKIVFAKKYLF</sequence>
<organism>
    <name type="scientific">Buchnera aphidicola subsp. Acyrthosiphon pisum (strain APS)</name>
    <name type="common">Acyrthosiphon pisum symbiotic bacterium</name>
    <dbReference type="NCBI Taxonomy" id="107806"/>
    <lineage>
        <taxon>Bacteria</taxon>
        <taxon>Pseudomonadati</taxon>
        <taxon>Pseudomonadota</taxon>
        <taxon>Gammaproteobacteria</taxon>
        <taxon>Enterobacterales</taxon>
        <taxon>Erwiniaceae</taxon>
        <taxon>Buchnera</taxon>
    </lineage>
</organism>
<proteinExistence type="inferred from homology"/>
<name>BAMA_BUCAI</name>
<dbReference type="EMBL" id="BA000003">
    <property type="protein sequence ID" value="BAB12952.1"/>
    <property type="molecule type" value="Genomic_DNA"/>
</dbReference>
<dbReference type="RefSeq" id="NP_240066.1">
    <property type="nucleotide sequence ID" value="NC_002528.1"/>
</dbReference>
<dbReference type="RefSeq" id="WP_010896020.1">
    <property type="nucleotide sequence ID" value="NC_002528.1"/>
</dbReference>
<dbReference type="SMR" id="P57331"/>
<dbReference type="STRING" id="563178.BUAP5A_232"/>
<dbReference type="EnsemblBacteria" id="BAB12952">
    <property type="protein sequence ID" value="BAB12952"/>
    <property type="gene ID" value="BAB12952"/>
</dbReference>
<dbReference type="KEGG" id="buc:BU237"/>
<dbReference type="PATRIC" id="fig|107806.10.peg.250"/>
<dbReference type="eggNOG" id="COG4775">
    <property type="taxonomic scope" value="Bacteria"/>
</dbReference>
<dbReference type="HOGENOM" id="CLU_007664_0_0_6"/>
<dbReference type="Proteomes" id="UP000001806">
    <property type="component" value="Chromosome"/>
</dbReference>
<dbReference type="GO" id="GO:1990063">
    <property type="term" value="C:Bam protein complex"/>
    <property type="evidence" value="ECO:0007669"/>
    <property type="project" value="TreeGrafter"/>
</dbReference>
<dbReference type="GO" id="GO:0043165">
    <property type="term" value="P:Gram-negative-bacterium-type cell outer membrane assembly"/>
    <property type="evidence" value="ECO:0007669"/>
    <property type="project" value="TreeGrafter"/>
</dbReference>
<dbReference type="GO" id="GO:0051205">
    <property type="term" value="P:protein insertion into membrane"/>
    <property type="evidence" value="ECO:0007669"/>
    <property type="project" value="TreeGrafter"/>
</dbReference>
<dbReference type="Gene3D" id="3.10.20.310">
    <property type="entry name" value="membrane protein fhac"/>
    <property type="match status" value="5"/>
</dbReference>
<dbReference type="Gene3D" id="2.40.160.50">
    <property type="entry name" value="membrane protein fhac: a member of the omp85/tpsb transporter family"/>
    <property type="match status" value="1"/>
</dbReference>
<dbReference type="InterPro" id="IPR000184">
    <property type="entry name" value="Bac_surfAg_D15"/>
</dbReference>
<dbReference type="InterPro" id="IPR010827">
    <property type="entry name" value="BamA/TamA_POTRA"/>
</dbReference>
<dbReference type="InterPro" id="IPR039910">
    <property type="entry name" value="D15-like"/>
</dbReference>
<dbReference type="InterPro" id="IPR029069">
    <property type="entry name" value="HotDog_dom_sf"/>
</dbReference>
<dbReference type="InterPro" id="IPR023707">
    <property type="entry name" value="OM_assembly_BamA"/>
</dbReference>
<dbReference type="InterPro" id="IPR034746">
    <property type="entry name" value="POTRA"/>
</dbReference>
<dbReference type="NCBIfam" id="TIGR03303">
    <property type="entry name" value="OM_YaeT"/>
    <property type="match status" value="1"/>
</dbReference>
<dbReference type="PANTHER" id="PTHR12815:SF23">
    <property type="entry name" value="OUTER MEMBRANE PROTEIN ASSEMBLY FACTOR BAMA"/>
    <property type="match status" value="1"/>
</dbReference>
<dbReference type="PANTHER" id="PTHR12815">
    <property type="entry name" value="SORTING AND ASSEMBLY MACHINERY SAMM50 PROTEIN FAMILY MEMBER"/>
    <property type="match status" value="1"/>
</dbReference>
<dbReference type="Pfam" id="PF01103">
    <property type="entry name" value="Omp85"/>
    <property type="match status" value="1"/>
</dbReference>
<dbReference type="Pfam" id="PF07244">
    <property type="entry name" value="POTRA"/>
    <property type="match status" value="5"/>
</dbReference>
<dbReference type="SUPFAM" id="SSF54637">
    <property type="entry name" value="Thioesterase/thiol ester dehydrase-isomerase"/>
    <property type="match status" value="1"/>
</dbReference>
<dbReference type="PROSITE" id="PS51779">
    <property type="entry name" value="POTRA"/>
    <property type="match status" value="5"/>
</dbReference>
<evidence type="ECO:0000250" key="1"/>
<evidence type="ECO:0000255" key="2"/>
<evidence type="ECO:0000255" key="3">
    <source>
        <dbReference type="PROSITE-ProRule" id="PRU01115"/>
    </source>
</evidence>
<evidence type="ECO:0000305" key="4"/>
<reference key="1">
    <citation type="journal article" date="2000" name="Nature">
        <title>Genome sequence of the endocellular bacterial symbiont of aphids Buchnera sp. APS.</title>
        <authorList>
            <person name="Shigenobu S."/>
            <person name="Watanabe H."/>
            <person name="Hattori M."/>
            <person name="Sakaki Y."/>
            <person name="Ishikawa H."/>
        </authorList>
    </citation>
    <scope>NUCLEOTIDE SEQUENCE [LARGE SCALE GENOMIC DNA]</scope>
    <source>
        <strain>APS</strain>
    </source>
</reference>
<keyword id="KW-0998">Cell outer membrane</keyword>
<keyword id="KW-0472">Membrane</keyword>
<keyword id="KW-1185">Reference proteome</keyword>
<keyword id="KW-0677">Repeat</keyword>
<keyword id="KW-0732">Signal</keyword>
<keyword id="KW-0812">Transmembrane</keyword>
<keyword id="KW-1134">Transmembrane beta strand</keyword>
<accession>P57331</accession>
<feature type="signal peptide" evidence="2">
    <location>
        <begin position="1"/>
        <end position="20"/>
    </location>
</feature>
<feature type="chain" id="PRO_0000033474" description="Outer membrane protein assembly factor BamA">
    <location>
        <begin position="21"/>
        <end position="617"/>
    </location>
</feature>
<feature type="domain" description="POTRA 1" evidence="3">
    <location>
        <begin position="24"/>
        <end position="91"/>
    </location>
</feature>
<feature type="domain" description="POTRA 2" evidence="3">
    <location>
        <begin position="92"/>
        <end position="172"/>
    </location>
</feature>
<feature type="domain" description="POTRA 3" evidence="3">
    <location>
        <begin position="175"/>
        <end position="263"/>
    </location>
</feature>
<feature type="domain" description="POTRA 4" evidence="3">
    <location>
        <begin position="266"/>
        <end position="344"/>
    </location>
</feature>
<feature type="domain" description="POTRA 5" evidence="3">
    <location>
        <begin position="347"/>
        <end position="421"/>
    </location>
</feature>
<comment type="function">
    <text evidence="1">Part of the outer membrane protein assembly complex, which is involved in assembly and insertion of beta-barrel proteins into the outer membrane.</text>
</comment>
<comment type="subunit">
    <text evidence="1">Part of the Bam complex.</text>
</comment>
<comment type="subcellular location">
    <subcellularLocation>
        <location evidence="1">Cell outer membrane</location>
    </subcellularLocation>
</comment>
<comment type="similarity">
    <text evidence="4">Belongs to the BamA family.</text>
</comment>
<comment type="caution">
    <text evidence="4">This sequence is shorter than orthologs.</text>
</comment>
<protein>
    <recommendedName>
        <fullName>Outer membrane protein assembly factor BamA</fullName>
    </recommendedName>
</protein>
<gene>
    <name type="primary">bamA</name>
    <name type="ordered locus">BU237</name>
</gene>